<name>CUL1_SCHPO</name>
<accession>O13790</accession>
<accession>Q9USB3</accession>
<accession>Q9UUL3</accession>
<comment type="function">
    <text evidence="10">Core component of multiple cullin-RING-based SCF (SKP1-CUL1-F-box protein) E3 ubiquitin-protein ligase complexes, which mediate the ubiquitination of target proteins. The functional specificity of the SCF complex depends on the F-box protein as substrate recognition component. SCF(pop1-pop2) is required for the maintenance of ploidy and directs ubiquitination of cig2.</text>
</comment>
<comment type="pathway">
    <text>Protein modification; protein ubiquitination.</text>
</comment>
<comment type="subunit">
    <text evidence="1 6 7 9 10">Component of multiple Cul1-RING E3 ubiquitin-protein ligase complexes commonly known as SCF (SKP1-CUL1-F-box) complexes, consisting of cul1, skp1, pip1 and a variable F-box domain-containing protein as substrate-specific subunit (By similarity). Binds to the pop1 homodimer, the pop2 homodimer and the pop1/pop2 heterodimer forming the SCF(pop1-pop2) complex. Interacts with pof3, pof14 and skp1.</text>
</comment>
<comment type="interaction">
    <interactant intactId="EBI-1154807">
        <id>O13790</id>
    </interactant>
    <interactant intactId="EBI-1153554">
        <id>O74991</id>
        <label>pof3</label>
    </interactant>
    <organismsDiffer>false</organismsDiffer>
    <experiments>2</experiments>
</comment>
<comment type="interaction">
    <interactant intactId="EBI-1154807">
        <id>O13790</id>
    </interactant>
    <interactant intactId="EBI-1185414">
        <id>O14170</id>
        <label>pop2</label>
    </interactant>
    <organismsDiffer>false</organismsDiffer>
    <experiments>3</experiments>
</comment>
<comment type="interaction">
    <interactant intactId="EBI-1154807">
        <id>O13790</id>
    </interactant>
    <interactant intactId="EBI-1172248">
        <id>Q9Y709</id>
        <label>skp1</label>
    </interactant>
    <organismsDiffer>false</organismsDiffer>
    <experiments>2</experiments>
</comment>
<comment type="subcellular location">
    <subcellularLocation>
        <location evidence="8">Cytoplasm</location>
    </subcellularLocation>
</comment>
<comment type="PTM">
    <text evidence="2">Neddylated; enhancing the ubiquitin-ligase activity.</text>
</comment>
<comment type="similarity">
    <text evidence="4">Belongs to the cullin family.</text>
</comment>
<evidence type="ECO:0000250" key="1"/>
<evidence type="ECO:0000250" key="2">
    <source>
        <dbReference type="UniProtKB" id="P47050"/>
    </source>
</evidence>
<evidence type="ECO:0000255" key="3"/>
<evidence type="ECO:0000255" key="4">
    <source>
        <dbReference type="PROSITE-ProRule" id="PRU00330"/>
    </source>
</evidence>
<evidence type="ECO:0000269" key="5">
    <source>
    </source>
</evidence>
<evidence type="ECO:0000269" key="6">
    <source>
    </source>
</evidence>
<evidence type="ECO:0000269" key="7">
    <source>
    </source>
</evidence>
<evidence type="ECO:0000269" key="8">
    <source>
    </source>
</evidence>
<evidence type="ECO:0000269" key="9">
    <source>
    </source>
</evidence>
<evidence type="ECO:0000269" key="10">
    <source>
    </source>
</evidence>
<evidence type="ECO:0000305" key="11"/>
<gene>
    <name type="primary">cul1</name>
    <name type="synonym">pcu1</name>
    <name type="ORF">SPAC17G6.12</name>
</gene>
<feature type="chain" id="PRO_0000119808" description="Cullin-1">
    <location>
        <begin position="1"/>
        <end position="767"/>
    </location>
</feature>
<feature type="domain" description="Cullin neddylation" evidence="3">
    <location>
        <begin position="699"/>
        <end position="760"/>
    </location>
</feature>
<feature type="cross-link" description="Glycyl lysine isopeptide (Lys-Gly) (interchain with G-Cter in NEDD8)" evidence="5">
    <location>
        <position position="713"/>
    </location>
</feature>
<feature type="mutagenesis site" description="Loss of neddylation; results in impaired cell proliferation and marked stabilization of the cyclin-dependent kinase inhibitor rum1." evidence="5">
    <original>K</original>
    <variation>R</variation>
    <location>
        <position position="713"/>
    </location>
</feature>
<feature type="sequence conflict" description="In Ref. 1; BAA32428." evidence="11" ref="1">
    <location>
        <position position="23"/>
    </location>
</feature>
<feature type="sequence conflict" description="In Ref. 1; BAA32428." evidence="11" ref="1">
    <original>T</original>
    <variation>TR</variation>
    <location>
        <position position="52"/>
    </location>
</feature>
<feature type="sequence conflict" description="In Ref. 1; BAA32428." evidence="11" ref="1">
    <original>T</original>
    <variation>A</variation>
    <location>
        <position position="74"/>
    </location>
</feature>
<organism>
    <name type="scientific">Schizosaccharomyces pombe (strain 972 / ATCC 24843)</name>
    <name type="common">Fission yeast</name>
    <dbReference type="NCBI Taxonomy" id="284812"/>
    <lineage>
        <taxon>Eukaryota</taxon>
        <taxon>Fungi</taxon>
        <taxon>Dikarya</taxon>
        <taxon>Ascomycota</taxon>
        <taxon>Taphrinomycotina</taxon>
        <taxon>Schizosaccharomycetes</taxon>
        <taxon>Schizosaccharomycetales</taxon>
        <taxon>Schizosaccharomycetaceae</taxon>
        <taxon>Schizosaccharomyces</taxon>
    </lineage>
</organism>
<sequence length="767" mass="89426">MTTLNTNDKDLPIVKKYDSLNGTWDFLKTGVSQIFERLDEGMTITKYMELYTAIHNYCADASKTITVDNFNDQTANVLGEALYNNLVLYLEEYLARLRKECISQTNHEEQLAAYAKYWTRFTTSARFINHLFGYLNRYWVKLKNRFTETLVYDIYTLCLVSWHHHVFSHIRDSLLQNLLYMFTKKRLYEPTDMKYVEVCVDSITSLSFDKTDMTKPNLSSYKTFFETNFIENTKNFYAKESSEYLASHSITDYLKKAEIRLAEEEELVRLYLHESTLKPLLEATEDVLIAQHEEVLHNDFARMLDQNCSEDIIRMYRLMSRTPNGLQPLRQTFEEFVKRSGFAAVAKIVPQVGGEADVDPKEYMEMLLSTYKASKELVNTAFHGDTDFTKSLDTAFRELVNRNVVCQRSSSRSPELLAKYADSILRKSNKNVDIDDVEDCLSSIIIIFRYVEDKDVFQNFYTKLLAKRLVNGTSNSQDAESSMLSKLKEVCGFEYTSKLQRMFQDISLSQEITEAFWQLPQSRAGNIDFSALVLGTSFWPLSPNNVNFHLPEELVPLYEGFQNYYYSCHNGRKLSWLFHLSKGEIKARINPQTNVTYVFQVSTYQMGVLLLYNHRDSYTYEELAKITGLSTDFLTGILNIFLKAKVLLLGDNDKLGDPNSTYKINENFRMKKIRVQLNLPIRSEQKQESLETHKTIEEDRKLLLQSAIVRIMKARRTLKHVVLVKETIDQIKSRFTPKVSDIKQCIDMLIEKEYLERQGRDEYIYLA</sequence>
<proteinExistence type="evidence at protein level"/>
<dbReference type="EMBL" id="AB016896">
    <property type="protein sequence ID" value="BAA32428.2"/>
    <property type="molecule type" value="Genomic_DNA"/>
</dbReference>
<dbReference type="EMBL" id="CU329670">
    <property type="protein sequence ID" value="CAB16223.1"/>
    <property type="molecule type" value="Genomic_DNA"/>
</dbReference>
<dbReference type="EMBL" id="AB027897">
    <property type="protein sequence ID" value="BAA87201.1"/>
    <property type="molecule type" value="Genomic_DNA"/>
</dbReference>
<dbReference type="PIR" id="T37844">
    <property type="entry name" value="T37844"/>
</dbReference>
<dbReference type="PIR" id="T43398">
    <property type="entry name" value="T43398"/>
</dbReference>
<dbReference type="RefSeq" id="NP_594259.1">
    <property type="nucleotide sequence ID" value="NM_001019682.2"/>
</dbReference>
<dbReference type="SMR" id="O13790"/>
<dbReference type="BioGRID" id="278857">
    <property type="interactions" value="30"/>
</dbReference>
<dbReference type="FunCoup" id="O13790">
    <property type="interactions" value="640"/>
</dbReference>
<dbReference type="IntAct" id="O13790">
    <property type="interactions" value="7"/>
</dbReference>
<dbReference type="MINT" id="O13790"/>
<dbReference type="STRING" id="284812.O13790"/>
<dbReference type="iPTMnet" id="O13790"/>
<dbReference type="PaxDb" id="4896-SPAC17G6.12.1"/>
<dbReference type="EnsemblFungi" id="SPAC17G6.12.1">
    <property type="protein sequence ID" value="SPAC17G6.12.1:pep"/>
    <property type="gene ID" value="SPAC17G6.12"/>
</dbReference>
<dbReference type="GeneID" id="2542393"/>
<dbReference type="KEGG" id="spo:2542393"/>
<dbReference type="PomBase" id="SPAC17G6.12">
    <property type="gene designation" value="cul1"/>
</dbReference>
<dbReference type="VEuPathDB" id="FungiDB:SPAC17G6.12"/>
<dbReference type="eggNOG" id="KOG2166">
    <property type="taxonomic scope" value="Eukaryota"/>
</dbReference>
<dbReference type="HOGENOM" id="CLU_004747_6_1_1"/>
<dbReference type="InParanoid" id="O13790"/>
<dbReference type="OMA" id="IREWDRY"/>
<dbReference type="PhylomeDB" id="O13790"/>
<dbReference type="Reactome" id="R-SPO-68949">
    <property type="pathway name" value="Orc1 removal from chromatin"/>
</dbReference>
<dbReference type="Reactome" id="R-SPO-8854050">
    <property type="pathway name" value="FBXL7 down-regulates AURKA during mitotic entry and in early mitosis"/>
</dbReference>
<dbReference type="Reactome" id="R-SPO-8951664">
    <property type="pathway name" value="Neddylation"/>
</dbReference>
<dbReference type="Reactome" id="R-SPO-917937">
    <property type="pathway name" value="Iron uptake and transport"/>
</dbReference>
<dbReference type="Reactome" id="R-SPO-983168">
    <property type="pathway name" value="Antigen processing: Ubiquitination &amp; Proteasome degradation"/>
</dbReference>
<dbReference type="UniPathway" id="UPA00143"/>
<dbReference type="PRO" id="PR:O13790"/>
<dbReference type="Proteomes" id="UP000002485">
    <property type="component" value="Chromosome I"/>
</dbReference>
<dbReference type="GO" id="GO:0005829">
    <property type="term" value="C:cytosol"/>
    <property type="evidence" value="ECO:0007005"/>
    <property type="project" value="PomBase"/>
</dbReference>
<dbReference type="GO" id="GO:0043224">
    <property type="term" value="C:nuclear SCF ubiquitin ligase complex"/>
    <property type="evidence" value="ECO:0000314"/>
    <property type="project" value="PomBase"/>
</dbReference>
<dbReference type="GO" id="GO:0019005">
    <property type="term" value="C:SCF ubiquitin ligase complex"/>
    <property type="evidence" value="ECO:0000314"/>
    <property type="project" value="PomBase"/>
</dbReference>
<dbReference type="GO" id="GO:0000822">
    <property type="term" value="F:inositol hexakisphosphate binding"/>
    <property type="evidence" value="ECO:0000269"/>
    <property type="project" value="PomBase"/>
</dbReference>
<dbReference type="GO" id="GO:0030674">
    <property type="term" value="F:protein-macromolecule adaptor activity"/>
    <property type="evidence" value="ECO:0000318"/>
    <property type="project" value="GO_Central"/>
</dbReference>
<dbReference type="GO" id="GO:0031625">
    <property type="term" value="F:ubiquitin protein ligase binding"/>
    <property type="evidence" value="ECO:0000318"/>
    <property type="project" value="GO_Central"/>
</dbReference>
<dbReference type="GO" id="GO:0051301">
    <property type="term" value="P:cell division"/>
    <property type="evidence" value="ECO:0007669"/>
    <property type="project" value="UniProtKB-KW"/>
</dbReference>
<dbReference type="GO" id="GO:0016567">
    <property type="term" value="P:protein ubiquitination"/>
    <property type="evidence" value="ECO:0000318"/>
    <property type="project" value="GO_Central"/>
</dbReference>
<dbReference type="GO" id="GO:0031146">
    <property type="term" value="P:SCF-dependent proteasomal ubiquitin-dependent protein catabolic process"/>
    <property type="evidence" value="ECO:0000314"/>
    <property type="project" value="PomBase"/>
</dbReference>
<dbReference type="FunFam" id="1.10.10.10:FF:000014">
    <property type="entry name" value="Cullin 1"/>
    <property type="match status" value="1"/>
</dbReference>
<dbReference type="FunFam" id="1.20.1310.10:FF:000026">
    <property type="entry name" value="Cullin 1"/>
    <property type="match status" value="1"/>
</dbReference>
<dbReference type="FunFam" id="1.20.1310.10:FF:000012">
    <property type="entry name" value="Cullin 2"/>
    <property type="match status" value="1"/>
</dbReference>
<dbReference type="FunFam" id="3.30.230.130:FF:000003">
    <property type="entry name" value="Cullin 2"/>
    <property type="match status" value="1"/>
</dbReference>
<dbReference type="FunFam" id="1.20.1310.10:FF:000001">
    <property type="entry name" value="Cullin 3"/>
    <property type="match status" value="1"/>
</dbReference>
<dbReference type="FunFam" id="1.20.1310.10:FF:000029">
    <property type="entry name" value="Cullin homolog 1"/>
    <property type="match status" value="1"/>
</dbReference>
<dbReference type="Gene3D" id="1.20.1310.10">
    <property type="entry name" value="Cullin Repeats"/>
    <property type="match status" value="4"/>
</dbReference>
<dbReference type="Gene3D" id="3.30.230.130">
    <property type="entry name" value="Cullin, Chain C, Domain 2"/>
    <property type="match status" value="1"/>
</dbReference>
<dbReference type="Gene3D" id="1.10.10.10">
    <property type="entry name" value="Winged helix-like DNA-binding domain superfamily/Winged helix DNA-binding domain"/>
    <property type="match status" value="1"/>
</dbReference>
<dbReference type="InterPro" id="IPR045093">
    <property type="entry name" value="Cullin"/>
</dbReference>
<dbReference type="InterPro" id="IPR016157">
    <property type="entry name" value="Cullin_CS"/>
</dbReference>
<dbReference type="InterPro" id="IPR016158">
    <property type="entry name" value="Cullin_homology"/>
</dbReference>
<dbReference type="InterPro" id="IPR036317">
    <property type="entry name" value="Cullin_homology_sf"/>
</dbReference>
<dbReference type="InterPro" id="IPR001373">
    <property type="entry name" value="Cullin_N"/>
</dbReference>
<dbReference type="InterPro" id="IPR019559">
    <property type="entry name" value="Cullin_neddylation_domain"/>
</dbReference>
<dbReference type="InterPro" id="IPR016159">
    <property type="entry name" value="Cullin_repeat-like_dom_sf"/>
</dbReference>
<dbReference type="InterPro" id="IPR036388">
    <property type="entry name" value="WH-like_DNA-bd_sf"/>
</dbReference>
<dbReference type="InterPro" id="IPR036390">
    <property type="entry name" value="WH_DNA-bd_sf"/>
</dbReference>
<dbReference type="PANTHER" id="PTHR11932">
    <property type="entry name" value="CULLIN"/>
    <property type="match status" value="1"/>
</dbReference>
<dbReference type="Pfam" id="PF00888">
    <property type="entry name" value="Cullin"/>
    <property type="match status" value="1"/>
</dbReference>
<dbReference type="Pfam" id="PF10557">
    <property type="entry name" value="Cullin_Nedd8"/>
    <property type="match status" value="1"/>
</dbReference>
<dbReference type="SMART" id="SM00182">
    <property type="entry name" value="CULLIN"/>
    <property type="match status" value="1"/>
</dbReference>
<dbReference type="SMART" id="SM00884">
    <property type="entry name" value="Cullin_Nedd8"/>
    <property type="match status" value="1"/>
</dbReference>
<dbReference type="SUPFAM" id="SSF75632">
    <property type="entry name" value="Cullin homology domain"/>
    <property type="match status" value="1"/>
</dbReference>
<dbReference type="SUPFAM" id="SSF74788">
    <property type="entry name" value="Cullin repeat-like"/>
    <property type="match status" value="1"/>
</dbReference>
<dbReference type="SUPFAM" id="SSF46785">
    <property type="entry name" value="Winged helix' DNA-binding domain"/>
    <property type="match status" value="1"/>
</dbReference>
<dbReference type="PROSITE" id="PS01256">
    <property type="entry name" value="CULLIN_1"/>
    <property type="match status" value="1"/>
</dbReference>
<dbReference type="PROSITE" id="PS50069">
    <property type="entry name" value="CULLIN_2"/>
    <property type="match status" value="1"/>
</dbReference>
<protein>
    <recommendedName>
        <fullName>Cullin-1</fullName>
        <shortName>Cul-1</shortName>
    </recommendedName>
    <alternativeName>
        <fullName>Cell division control 53 homolog</fullName>
    </alternativeName>
</protein>
<reference key="1">
    <citation type="journal article" date="1998" name="Genes Cells">
        <title>Two F-box/WD-repeat proteins Pop1 and Pop2 form hetero- and homo-complexes together with cullin-1 in fission yeast SCF (Skip-cullin-1-F-box) ubiquitin ligase.</title>
        <authorList>
            <person name="Kominami K."/>
            <person name="Ochotorena I."/>
            <person name="Toda T."/>
        </authorList>
    </citation>
    <scope>NUCLEOTIDE SEQUENCE [GENOMIC DNA]</scope>
    <scope>FUNCTION</scope>
    <scope>SUBUNIT</scope>
    <source>
        <strain>972 / ATCC 24843</strain>
    </source>
</reference>
<reference key="2">
    <citation type="journal article" date="2002" name="Nature">
        <title>The genome sequence of Schizosaccharomyces pombe.</title>
        <authorList>
            <person name="Wood V."/>
            <person name="Gwilliam R."/>
            <person name="Rajandream M.A."/>
            <person name="Lyne M.H."/>
            <person name="Lyne R."/>
            <person name="Stewart A."/>
            <person name="Sgouros J.G."/>
            <person name="Peat N."/>
            <person name="Hayles J."/>
            <person name="Baker S.G."/>
            <person name="Basham D."/>
            <person name="Bowman S."/>
            <person name="Brooks K."/>
            <person name="Brown D."/>
            <person name="Brown S."/>
            <person name="Chillingworth T."/>
            <person name="Churcher C.M."/>
            <person name="Collins M."/>
            <person name="Connor R."/>
            <person name="Cronin A."/>
            <person name="Davis P."/>
            <person name="Feltwell T."/>
            <person name="Fraser A."/>
            <person name="Gentles S."/>
            <person name="Goble A."/>
            <person name="Hamlin N."/>
            <person name="Harris D.E."/>
            <person name="Hidalgo J."/>
            <person name="Hodgson G."/>
            <person name="Holroyd S."/>
            <person name="Hornsby T."/>
            <person name="Howarth S."/>
            <person name="Huckle E.J."/>
            <person name="Hunt S."/>
            <person name="Jagels K."/>
            <person name="James K.D."/>
            <person name="Jones L."/>
            <person name="Jones M."/>
            <person name="Leather S."/>
            <person name="McDonald S."/>
            <person name="McLean J."/>
            <person name="Mooney P."/>
            <person name="Moule S."/>
            <person name="Mungall K.L."/>
            <person name="Murphy L.D."/>
            <person name="Niblett D."/>
            <person name="Odell C."/>
            <person name="Oliver K."/>
            <person name="O'Neil S."/>
            <person name="Pearson D."/>
            <person name="Quail M.A."/>
            <person name="Rabbinowitsch E."/>
            <person name="Rutherford K.M."/>
            <person name="Rutter S."/>
            <person name="Saunders D."/>
            <person name="Seeger K."/>
            <person name="Sharp S."/>
            <person name="Skelton J."/>
            <person name="Simmonds M.N."/>
            <person name="Squares R."/>
            <person name="Squares S."/>
            <person name="Stevens K."/>
            <person name="Taylor K."/>
            <person name="Taylor R.G."/>
            <person name="Tivey A."/>
            <person name="Walsh S.V."/>
            <person name="Warren T."/>
            <person name="Whitehead S."/>
            <person name="Woodward J.R."/>
            <person name="Volckaert G."/>
            <person name="Aert R."/>
            <person name="Robben J."/>
            <person name="Grymonprez B."/>
            <person name="Weltjens I."/>
            <person name="Vanstreels E."/>
            <person name="Rieger M."/>
            <person name="Schaefer M."/>
            <person name="Mueller-Auer S."/>
            <person name="Gabel C."/>
            <person name="Fuchs M."/>
            <person name="Duesterhoeft A."/>
            <person name="Fritzc C."/>
            <person name="Holzer E."/>
            <person name="Moestl D."/>
            <person name="Hilbert H."/>
            <person name="Borzym K."/>
            <person name="Langer I."/>
            <person name="Beck A."/>
            <person name="Lehrach H."/>
            <person name="Reinhardt R."/>
            <person name="Pohl T.M."/>
            <person name="Eger P."/>
            <person name="Zimmermann W."/>
            <person name="Wedler H."/>
            <person name="Wambutt R."/>
            <person name="Purnelle B."/>
            <person name="Goffeau A."/>
            <person name="Cadieu E."/>
            <person name="Dreano S."/>
            <person name="Gloux S."/>
            <person name="Lelaure V."/>
            <person name="Mottier S."/>
            <person name="Galibert F."/>
            <person name="Aves S.J."/>
            <person name="Xiang Z."/>
            <person name="Hunt C."/>
            <person name="Moore K."/>
            <person name="Hurst S.M."/>
            <person name="Lucas M."/>
            <person name="Rochet M."/>
            <person name="Gaillardin C."/>
            <person name="Tallada V.A."/>
            <person name="Garzon A."/>
            <person name="Thode G."/>
            <person name="Daga R.R."/>
            <person name="Cruzado L."/>
            <person name="Jimenez J."/>
            <person name="Sanchez M."/>
            <person name="del Rey F."/>
            <person name="Benito J."/>
            <person name="Dominguez A."/>
            <person name="Revuelta J.L."/>
            <person name="Moreno S."/>
            <person name="Armstrong J."/>
            <person name="Forsburg S.L."/>
            <person name="Cerutti L."/>
            <person name="Lowe T."/>
            <person name="McCombie W.R."/>
            <person name="Paulsen I."/>
            <person name="Potashkin J."/>
            <person name="Shpakovski G.V."/>
            <person name="Ussery D."/>
            <person name="Barrell B.G."/>
            <person name="Nurse P."/>
        </authorList>
    </citation>
    <scope>NUCLEOTIDE SEQUENCE [LARGE SCALE GENOMIC DNA]</scope>
    <source>
        <strain>972 / ATCC 24843</strain>
    </source>
</reference>
<reference key="3">
    <citation type="journal article" date="2000" name="Genes Cells">
        <title>Large-scale screening of intracellular protein localization in living fission yeast cells by the use of a GFP-fusion genomic DNA library.</title>
        <authorList>
            <person name="Ding D.-Q."/>
            <person name="Tomita Y."/>
            <person name="Yamamoto A."/>
            <person name="Chikashige Y."/>
            <person name="Haraguchi T."/>
            <person name="Hiraoka Y."/>
        </authorList>
    </citation>
    <scope>NUCLEOTIDE SEQUENCE [LARGE SCALE GENOMIC DNA] OF 197-359</scope>
    <source>
        <strain>ATCC 38364 / 968</strain>
    </source>
</reference>
<reference key="4">
    <citation type="journal article" date="2000" name="EMBO J.">
        <title>Covalent modifier NEDD8 is essential for SCF ubiquitin-ligase in fission yeast.</title>
        <authorList>
            <person name="Osaka F."/>
            <person name="Saeki M."/>
            <person name="Katayama S."/>
            <person name="Aida N."/>
            <person name="Toh-e A."/>
            <person name="Kominami K."/>
            <person name="Toda T."/>
            <person name="Suzuki T."/>
            <person name="Chiba T."/>
            <person name="Tanaka K."/>
            <person name="Kato S."/>
        </authorList>
    </citation>
    <scope>NEDDYLATION AT LYS-713</scope>
    <scope>MUTAGENESIS OF LYS-713</scope>
</reference>
<reference key="5">
    <citation type="journal article" date="2002" name="Mol. Biol. Cell">
        <title>Fission yeast F-box protein Pof3 is required for genome integrity and telomere function.</title>
        <authorList>
            <person name="Katayama S."/>
            <person name="Kitamura K."/>
            <person name="Lehmann A."/>
            <person name="Nikaido O."/>
            <person name="Toda T."/>
        </authorList>
    </citation>
    <scope>INTERACTION WITH POF3</scope>
</reference>
<reference key="6">
    <citation type="journal article" date="2004" name="Genes Cells">
        <title>Molecular interactions of fission yeast Skp1 and its role in the DNA damage checkpoint.</title>
        <authorList>
            <person name="Lehmann A."/>
            <person name="Katayama S."/>
            <person name="Harrison C."/>
            <person name="Dhut S."/>
            <person name="Kitamura K."/>
            <person name="McDonald N."/>
            <person name="Toda T."/>
        </authorList>
    </citation>
    <scope>INTERACTION WITH SKP1</scope>
</reference>
<reference key="7">
    <citation type="journal article" date="2006" name="EMBO J.">
        <title>Repression of ergosterol level during oxidative stress by fission yeast F-box protein Pof14 independently of SCF.</title>
        <authorList>
            <person name="Tafforeau L."/>
            <person name="Le Blastier S."/>
            <person name="Bamps S."/>
            <person name="Dewez M."/>
            <person name="Vandenhaute J."/>
            <person name="Hermand D."/>
        </authorList>
    </citation>
    <scope>INTERACTION WITH POF14</scope>
</reference>
<reference key="8">
    <citation type="journal article" date="2006" name="Nat. Biotechnol.">
        <title>ORFeome cloning and global analysis of protein localization in the fission yeast Schizosaccharomyces pombe.</title>
        <authorList>
            <person name="Matsuyama A."/>
            <person name="Arai R."/>
            <person name="Yashiroda Y."/>
            <person name="Shirai A."/>
            <person name="Kamata A."/>
            <person name="Sekido S."/>
            <person name="Kobayashi Y."/>
            <person name="Hashimoto A."/>
            <person name="Hamamoto M."/>
            <person name="Hiraoka Y."/>
            <person name="Horinouchi S."/>
            <person name="Yoshida M."/>
        </authorList>
    </citation>
    <scope>SUBCELLULAR LOCATION [LARGE SCALE ANALYSIS]</scope>
</reference>
<keyword id="KW-0131">Cell cycle</keyword>
<keyword id="KW-0132">Cell division</keyword>
<keyword id="KW-0963">Cytoplasm</keyword>
<keyword id="KW-1017">Isopeptide bond</keyword>
<keyword id="KW-1185">Reference proteome</keyword>
<keyword id="KW-0832">Ubl conjugation</keyword>